<name>HFLK_VIBCH</name>
<protein>
    <recommendedName>
        <fullName>Protein HflK</fullName>
    </recommendedName>
</protein>
<dbReference type="EMBL" id="AE003852">
    <property type="protein sequence ID" value="AAF93522.1"/>
    <property type="molecule type" value="Genomic_DNA"/>
</dbReference>
<dbReference type="PIR" id="E82334">
    <property type="entry name" value="E82334"/>
</dbReference>
<dbReference type="RefSeq" id="NP_230003.1">
    <property type="nucleotide sequence ID" value="NC_002505.1"/>
</dbReference>
<dbReference type="RefSeq" id="WP_000312460.1">
    <property type="nucleotide sequence ID" value="NZ_LT906614.1"/>
</dbReference>
<dbReference type="SMR" id="Q9KV09"/>
<dbReference type="STRING" id="243277.VC_0349"/>
<dbReference type="DNASU" id="2615062"/>
<dbReference type="EnsemblBacteria" id="AAF93522">
    <property type="protein sequence ID" value="AAF93522"/>
    <property type="gene ID" value="VC_0349"/>
</dbReference>
<dbReference type="GeneID" id="69720907"/>
<dbReference type="KEGG" id="vch:VC_0349"/>
<dbReference type="PATRIC" id="fig|243277.26.peg.326"/>
<dbReference type="eggNOG" id="COG0330">
    <property type="taxonomic scope" value="Bacteria"/>
</dbReference>
<dbReference type="HOGENOM" id="CLU_039173_1_0_6"/>
<dbReference type="Proteomes" id="UP000000584">
    <property type="component" value="Chromosome 1"/>
</dbReference>
<dbReference type="GO" id="GO:0016020">
    <property type="term" value="C:membrane"/>
    <property type="evidence" value="ECO:0007669"/>
    <property type="project" value="UniProtKB-SubCell"/>
</dbReference>
<dbReference type="CDD" id="cd03404">
    <property type="entry name" value="SPFH_HflK"/>
    <property type="match status" value="1"/>
</dbReference>
<dbReference type="FunFam" id="3.30.479.30:FF:000007">
    <property type="entry name" value="Protein HflK"/>
    <property type="match status" value="1"/>
</dbReference>
<dbReference type="Gene3D" id="3.30.479.30">
    <property type="entry name" value="Band 7 domain"/>
    <property type="match status" value="1"/>
</dbReference>
<dbReference type="InterPro" id="IPR050710">
    <property type="entry name" value="Band7/mec-2_domain"/>
</dbReference>
<dbReference type="InterPro" id="IPR001107">
    <property type="entry name" value="Band_7"/>
</dbReference>
<dbReference type="InterPro" id="IPR036013">
    <property type="entry name" value="Band_7/SPFH_dom_sf"/>
</dbReference>
<dbReference type="InterPro" id="IPR010201">
    <property type="entry name" value="HflK"/>
</dbReference>
<dbReference type="InterPro" id="IPR020980">
    <property type="entry name" value="Membrane_HflK_N"/>
</dbReference>
<dbReference type="InterPro" id="IPR001972">
    <property type="entry name" value="Stomatin_HflK_fam"/>
</dbReference>
<dbReference type="NCBIfam" id="TIGR01933">
    <property type="entry name" value="hflK"/>
    <property type="match status" value="1"/>
</dbReference>
<dbReference type="PANTHER" id="PTHR43327:SF2">
    <property type="entry name" value="MODULATOR OF FTSH PROTEASE HFLK"/>
    <property type="match status" value="1"/>
</dbReference>
<dbReference type="PANTHER" id="PTHR43327">
    <property type="entry name" value="STOMATIN-LIKE PROTEIN 2, MITOCHONDRIAL"/>
    <property type="match status" value="1"/>
</dbReference>
<dbReference type="Pfam" id="PF01145">
    <property type="entry name" value="Band_7"/>
    <property type="match status" value="1"/>
</dbReference>
<dbReference type="Pfam" id="PF12221">
    <property type="entry name" value="HflK_N"/>
    <property type="match status" value="1"/>
</dbReference>
<dbReference type="PRINTS" id="PR00721">
    <property type="entry name" value="STOMATIN"/>
</dbReference>
<dbReference type="SMART" id="SM00244">
    <property type="entry name" value="PHB"/>
    <property type="match status" value="1"/>
</dbReference>
<dbReference type="SUPFAM" id="SSF117892">
    <property type="entry name" value="Band 7/SPFH domain"/>
    <property type="match status" value="1"/>
</dbReference>
<keyword id="KW-0472">Membrane</keyword>
<keyword id="KW-1185">Reference proteome</keyword>
<keyword id="KW-0812">Transmembrane</keyword>
<keyword id="KW-1133">Transmembrane helix</keyword>
<proteinExistence type="inferred from homology"/>
<gene>
    <name type="primary">hflK</name>
    <name type="ordered locus">VC_0349</name>
</gene>
<comment type="function">
    <text evidence="1">HflC and HflK could encode or regulate a protease.</text>
</comment>
<comment type="subunit">
    <text>HflC and HflK may interact to form a multimeric complex.</text>
</comment>
<comment type="subcellular location">
    <subcellularLocation>
        <location evidence="4">Membrane</location>
        <topology evidence="4">Single-pass membrane protein</topology>
    </subcellularLocation>
</comment>
<comment type="similarity">
    <text evidence="4">Belongs to the band 7/mec-2 family. HflK subfamily.</text>
</comment>
<reference key="1">
    <citation type="journal article" date="2000" name="Nature">
        <title>DNA sequence of both chromosomes of the cholera pathogen Vibrio cholerae.</title>
        <authorList>
            <person name="Heidelberg J.F."/>
            <person name="Eisen J.A."/>
            <person name="Nelson W.C."/>
            <person name="Clayton R.A."/>
            <person name="Gwinn M.L."/>
            <person name="Dodson R.J."/>
            <person name="Haft D.H."/>
            <person name="Hickey E.K."/>
            <person name="Peterson J.D."/>
            <person name="Umayam L.A."/>
            <person name="Gill S.R."/>
            <person name="Nelson K.E."/>
            <person name="Read T.D."/>
            <person name="Tettelin H."/>
            <person name="Richardson D.L."/>
            <person name="Ermolaeva M.D."/>
            <person name="Vamathevan J.J."/>
            <person name="Bass S."/>
            <person name="Qin H."/>
            <person name="Dragoi I."/>
            <person name="Sellers P."/>
            <person name="McDonald L.A."/>
            <person name="Utterback T.R."/>
            <person name="Fleischmann R.D."/>
            <person name="Nierman W.C."/>
            <person name="White O."/>
            <person name="Salzberg S.L."/>
            <person name="Smith H.O."/>
            <person name="Colwell R.R."/>
            <person name="Mekalanos J.J."/>
            <person name="Venter J.C."/>
            <person name="Fraser C.M."/>
        </authorList>
    </citation>
    <scope>NUCLEOTIDE SEQUENCE [LARGE SCALE GENOMIC DNA]</scope>
    <source>
        <strain>ATCC 39315 / El Tor Inaba N16961</strain>
    </source>
</reference>
<sequence>MAWNEPGNNNGNNGRDNDPWGNNNRGNKGGRDQGPPDLDEVFNKLSQKLGGKFGGKGGKGPSFSGGGAIGFGVIAAIAVAVWFFTGFYTIGEAERGVVLRLGKYDRIVDPGLNWRPRFIDEVTPVNVQAIRSLRASGLMLTKDENVVTVSMDVQYRIADPYKYLYRVTNADDSLRQATDSALRAVVGDSLMDSILTSGRQQIRQSTQQTLNQVIDSYDMGLMIVDVNFQSARPPEQVKDAFDDAIAAREDEERFIREAEAYKNEILPKATGRAERLKKEAQGYNERTINEALGQVAQFEKLLPEYQAAPKVTRDRLYLDAMEQVYSNTSKVLIDSESSGNLLYLPIDKLAGQDNKTAQPRPNKSSSAYDQIELESQTTETNTDTQSRSTTRQGRY</sequence>
<feature type="chain" id="PRO_0000094089" description="Protein HflK">
    <location>
        <begin position="1"/>
        <end position="395"/>
    </location>
</feature>
<feature type="transmembrane region" description="Helical" evidence="2">
    <location>
        <begin position="67"/>
        <end position="87"/>
    </location>
</feature>
<feature type="region of interest" description="Disordered" evidence="3">
    <location>
        <begin position="1"/>
        <end position="40"/>
    </location>
</feature>
<feature type="region of interest" description="Disordered" evidence="3">
    <location>
        <begin position="352"/>
        <end position="395"/>
    </location>
</feature>
<feature type="compositionally biased region" description="Low complexity" evidence="3">
    <location>
        <begin position="1"/>
        <end position="26"/>
    </location>
</feature>
<feature type="compositionally biased region" description="Polar residues" evidence="3">
    <location>
        <begin position="353"/>
        <end position="395"/>
    </location>
</feature>
<evidence type="ECO:0000250" key="1"/>
<evidence type="ECO:0000255" key="2"/>
<evidence type="ECO:0000256" key="3">
    <source>
        <dbReference type="SAM" id="MobiDB-lite"/>
    </source>
</evidence>
<evidence type="ECO:0000305" key="4"/>
<organism>
    <name type="scientific">Vibrio cholerae serotype O1 (strain ATCC 39315 / El Tor Inaba N16961)</name>
    <dbReference type="NCBI Taxonomy" id="243277"/>
    <lineage>
        <taxon>Bacteria</taxon>
        <taxon>Pseudomonadati</taxon>
        <taxon>Pseudomonadota</taxon>
        <taxon>Gammaproteobacteria</taxon>
        <taxon>Vibrionales</taxon>
        <taxon>Vibrionaceae</taxon>
        <taxon>Vibrio</taxon>
    </lineage>
</organism>
<accession>Q9KV09</accession>